<accession>B5F3A8</accession>
<keyword id="KW-0963">Cytoplasm</keyword>
<keyword id="KW-0378">Hydrolase</keyword>
<evidence type="ECO:0000255" key="1">
    <source>
        <dbReference type="HAMAP-Rule" id="MF_01266"/>
    </source>
</evidence>
<dbReference type="EC" id="3.1.1.-" evidence="1"/>
<dbReference type="EMBL" id="CP001138">
    <property type="protein sequence ID" value="ACH50892.1"/>
    <property type="molecule type" value="Genomic_DNA"/>
</dbReference>
<dbReference type="RefSeq" id="WP_000049161.1">
    <property type="nucleotide sequence ID" value="NC_011149.1"/>
</dbReference>
<dbReference type="SMR" id="B5F3A8"/>
<dbReference type="GeneID" id="66758606"/>
<dbReference type="KEGG" id="sea:SeAg_B4660"/>
<dbReference type="HOGENOM" id="CLU_074775_0_0_6"/>
<dbReference type="UniPathway" id="UPA00263">
    <property type="reaction ID" value="UER00377"/>
</dbReference>
<dbReference type="Proteomes" id="UP000008819">
    <property type="component" value="Chromosome"/>
</dbReference>
<dbReference type="GO" id="GO:0005737">
    <property type="term" value="C:cytoplasm"/>
    <property type="evidence" value="ECO:0007669"/>
    <property type="project" value="UniProtKB-SubCell"/>
</dbReference>
<dbReference type="GO" id="GO:0035460">
    <property type="term" value="F:L-ascorbate 6-phosphate lactonase activity"/>
    <property type="evidence" value="ECO:0007669"/>
    <property type="project" value="InterPro"/>
</dbReference>
<dbReference type="GO" id="GO:0030145">
    <property type="term" value="F:manganese ion binding"/>
    <property type="evidence" value="ECO:0007669"/>
    <property type="project" value="InterPro"/>
</dbReference>
<dbReference type="GO" id="GO:0019854">
    <property type="term" value="P:L-ascorbic acid catabolic process"/>
    <property type="evidence" value="ECO:0007669"/>
    <property type="project" value="UniProtKB-UniRule"/>
</dbReference>
<dbReference type="CDD" id="cd16284">
    <property type="entry name" value="UlaG-like_MBL-fold"/>
    <property type="match status" value="1"/>
</dbReference>
<dbReference type="FunFam" id="3.60.15.10:FF:000004">
    <property type="entry name" value="Probable L-ascorbate-6-phosphate lactonase UlaG"/>
    <property type="match status" value="1"/>
</dbReference>
<dbReference type="Gene3D" id="3.60.15.10">
    <property type="entry name" value="Ribonuclease Z/Hydroxyacylglutathione hydrolase-like"/>
    <property type="match status" value="1"/>
</dbReference>
<dbReference type="HAMAP" id="MF_01266">
    <property type="entry name" value="UlaG"/>
    <property type="match status" value="1"/>
</dbReference>
<dbReference type="InterPro" id="IPR023951">
    <property type="entry name" value="L-ascorbate_6P_UlaG"/>
</dbReference>
<dbReference type="InterPro" id="IPR001279">
    <property type="entry name" value="Metallo-B-lactamas"/>
</dbReference>
<dbReference type="InterPro" id="IPR036866">
    <property type="entry name" value="RibonucZ/Hydroxyglut_hydro"/>
</dbReference>
<dbReference type="InterPro" id="IPR048021">
    <property type="entry name" value="UlaG-like_MBL-fold"/>
</dbReference>
<dbReference type="InterPro" id="IPR050114">
    <property type="entry name" value="UPF0173_UPF0282_UlaG_hydrolase"/>
</dbReference>
<dbReference type="NCBIfam" id="NF008688">
    <property type="entry name" value="PRK11709.1"/>
    <property type="match status" value="1"/>
</dbReference>
<dbReference type="PANTHER" id="PTHR43546:SF9">
    <property type="entry name" value="L-ASCORBATE-6-PHOSPHATE LACTONASE ULAG-RELATED"/>
    <property type="match status" value="1"/>
</dbReference>
<dbReference type="PANTHER" id="PTHR43546">
    <property type="entry name" value="UPF0173 METAL-DEPENDENT HYDROLASE MJ1163-RELATED"/>
    <property type="match status" value="1"/>
</dbReference>
<dbReference type="Pfam" id="PF12706">
    <property type="entry name" value="Lactamase_B_2"/>
    <property type="match status" value="1"/>
</dbReference>
<dbReference type="SUPFAM" id="SSF56281">
    <property type="entry name" value="Metallo-hydrolase/oxidoreductase"/>
    <property type="match status" value="1"/>
</dbReference>
<sequence>MSKVQSITRESWILSTFPEWGSWLNEEIEQEQVAPGTFAMWWLGCTGIWLKSEGGTNVCVDFWCGTGKQSHGNPLMKTGHQMQRMAGVKKLQPNLRTTPFVLDPFAIRQIDAVLATHDHNDHIDVNVAAAVMQNCADDVPFIGPQTCVDLWVGWGVPKERCIVVKPGDVVKVKDIEIHALDAFDRTALITLPADQKAAGVLPDGMDVRAVNYLFKTPGGNLYHSGDSHYSNYYAKHGNEHQIDVALGSYGENPRGITDKMTSADILRMAESLNTKVVIPFHHDIWSNFQADPQEIRVLWEMKKDRLKYGFKPFIWQVGGKFTWPLDKDNFEYHYPRGFDDCFTIEPDLPFKSFL</sequence>
<name>ULAG_SALA4</name>
<proteinExistence type="inferred from homology"/>
<protein>
    <recommendedName>
        <fullName evidence="1">Probable L-ascorbate-6-phosphate lactonase UlaG</fullName>
        <ecNumber evidence="1">3.1.1.-</ecNumber>
    </recommendedName>
    <alternativeName>
        <fullName evidence="1">L-ascorbate utilization protein G</fullName>
    </alternativeName>
</protein>
<reference key="1">
    <citation type="journal article" date="2011" name="J. Bacteriol.">
        <title>Comparative genomics of 28 Salmonella enterica isolates: evidence for CRISPR-mediated adaptive sublineage evolution.</title>
        <authorList>
            <person name="Fricke W.F."/>
            <person name="Mammel M.K."/>
            <person name="McDermott P.F."/>
            <person name="Tartera C."/>
            <person name="White D.G."/>
            <person name="Leclerc J.E."/>
            <person name="Ravel J."/>
            <person name="Cebula T.A."/>
        </authorList>
    </citation>
    <scope>NUCLEOTIDE SEQUENCE [LARGE SCALE GENOMIC DNA]</scope>
    <source>
        <strain>SL483</strain>
    </source>
</reference>
<feature type="chain" id="PRO_1000140100" description="Probable L-ascorbate-6-phosphate lactonase UlaG">
    <location>
        <begin position="1"/>
        <end position="354"/>
    </location>
</feature>
<gene>
    <name evidence="1" type="primary">ulaG</name>
    <name type="ordered locus">SeAg_B4660</name>
</gene>
<comment type="function">
    <text evidence="1">Probably catalyzes the hydrolysis of L-ascorbate-6-P into 3-keto-L-gulonate-6-P. Is essential for L-ascorbate utilization under anaerobic conditions.</text>
</comment>
<comment type="catalytic activity">
    <reaction evidence="1">
        <text>L-ascorbate 6-phosphate + H2O = 3-dehydro-L-gulonate 6-phosphate</text>
        <dbReference type="Rhea" id="RHEA:28803"/>
        <dbReference type="ChEBI" id="CHEBI:15377"/>
        <dbReference type="ChEBI" id="CHEBI:58774"/>
        <dbReference type="ChEBI" id="CHEBI:61698"/>
    </reaction>
</comment>
<comment type="cofactor">
    <cofactor evidence="1">
        <name>a divalent metal cation</name>
        <dbReference type="ChEBI" id="CHEBI:60240"/>
    </cofactor>
</comment>
<comment type="pathway">
    <text evidence="1">Cofactor degradation; L-ascorbate degradation; D-xylulose 5-phosphate from L-ascorbate: step 1/4.</text>
</comment>
<comment type="subcellular location">
    <subcellularLocation>
        <location evidence="1">Cytoplasm</location>
    </subcellularLocation>
</comment>
<comment type="induction">
    <text evidence="1">Induced by L-ascorbate. Repressed by UlaR.</text>
</comment>
<comment type="similarity">
    <text evidence="1">Belongs to the UlaG family.</text>
</comment>
<organism>
    <name type="scientific">Salmonella agona (strain SL483)</name>
    <dbReference type="NCBI Taxonomy" id="454166"/>
    <lineage>
        <taxon>Bacteria</taxon>
        <taxon>Pseudomonadati</taxon>
        <taxon>Pseudomonadota</taxon>
        <taxon>Gammaproteobacteria</taxon>
        <taxon>Enterobacterales</taxon>
        <taxon>Enterobacteriaceae</taxon>
        <taxon>Salmonella</taxon>
    </lineage>
</organism>